<organism>
    <name type="scientific">Corynebacterium efficiens (strain DSM 44549 / YS-314 / AJ 12310 / JCM 11189 / NBRC 100395)</name>
    <dbReference type="NCBI Taxonomy" id="196164"/>
    <lineage>
        <taxon>Bacteria</taxon>
        <taxon>Bacillati</taxon>
        <taxon>Actinomycetota</taxon>
        <taxon>Actinomycetes</taxon>
        <taxon>Mycobacteriales</taxon>
        <taxon>Corynebacteriaceae</taxon>
        <taxon>Corynebacterium</taxon>
    </lineage>
</organism>
<name>ACNA_COREF</name>
<reference key="1">
    <citation type="journal article" date="2003" name="Genome Res.">
        <title>Comparative complete genome sequence analysis of the amino acid replacements responsible for the thermostability of Corynebacterium efficiens.</title>
        <authorList>
            <person name="Nishio Y."/>
            <person name="Nakamura Y."/>
            <person name="Kawarabayasi Y."/>
            <person name="Usuda Y."/>
            <person name="Kimura E."/>
            <person name="Sugimoto S."/>
            <person name="Matsui K."/>
            <person name="Yamagishi A."/>
            <person name="Kikuchi H."/>
            <person name="Ikeo K."/>
            <person name="Gojobori T."/>
        </authorList>
    </citation>
    <scope>NUCLEOTIDE SEQUENCE [LARGE SCALE GENOMIC DNA]</scope>
    <source>
        <strain>DSM 44549 / YS-314 / AJ 12310 / JCM 11189 / NBRC 100395</strain>
    </source>
</reference>
<proteinExistence type="inferred from homology"/>
<sequence length="937" mass="102106">MTESKNSFNAKSTLQVGEKSYDYYALSAVPGMEKLPYSLKVLGENLLRTEDGANITEEHIEAIANWDASADPSIEIQFTPARVLMQDFTGVPCVVDLATMREAVKTLGGDPDKVNPLNPAEMVIDHSVIVEAFGRPDALEKNVEIEYERNEERYQFLRWGSEAFSNFRVVPPGTGIVHQVNIEYLARVVFDNDGLAYPDTCIGTDSHTTMENGLGILGWGVGGIEAEAAMLGQPVSMLIPRVVGFKLTGEIPVGVTATDVVLTITEMLRDHGVVQKFVEFYGNGVKSVPLANRATIGNMSPEFGSTCAMFPIDEETIKYLRLTGRPEEQIALVEAYAKAQGMWLEQDAPEAEYSEYLELDLSTVVPSIAGPKRPQDRILLSEAKEQFREDLKAYTNDPVQVDQSIPAKRMANEGGFQPGSTSDLDNYNASWPGEGESAAANAEGRPSNPVTVVSPQGGEYTIDHGMVAIASITSCTNTSNPSVMIGAGLIARKAAEKGLKSKPWVKTICAPGSQVVDGYYQRADLWKDLEALGFYLSGFGCTTCIGNSGPLPEEISEAINEHDLAATAVLSGNRNFEGRISPDVKMNYLASPIMVIAYAIAGTMDFDFENEALGQDQDGNDVFLKDIWPSTEEIEETIQAAISRELYEADYADVFKGDKQWQELDIPSGKTFEWDENSTYIRKAPYFDGMTAEPQPVTDIENARVLAKLGDSVTTDHISPASSIKPGTPAAQYLDAHGVERQDYNSLGSRRGNHEVMMRGTFANIRLQNQLVDIAGGYTRDFTQEGGPQAFIYDACVNYKEAGIPLVVLAGKEYGTGSSRDWAAKGTNLLGVRAVITESFERIHRSNLIGMGVVPLQFPEGESHESLGLDGTETFDITGLTALNEGTTPKTVKVTATKENGEKVEFDAVVRIDTPGEADYFRHGGILQYVLRQMAAS</sequence>
<protein>
    <recommendedName>
        <fullName evidence="3">Aconitate hydratase A</fullName>
        <shortName evidence="3">ACN</shortName>
        <shortName evidence="3">Aconitase</shortName>
        <ecNumber evidence="3">4.2.1.3</ecNumber>
    </recommendedName>
    <alternativeName>
        <fullName evidence="4">(2R,3S)-2-methylisocitrate dehydratase</fullName>
    </alternativeName>
    <alternativeName>
        <fullName evidence="4">(2S,3R)-3-hydroxybutane-1,2,3-tricarboxylate dehydratase</fullName>
    </alternativeName>
    <alternativeName>
        <fullName evidence="1">Iron-responsive protein-like</fullName>
        <shortName evidence="1">IRP-like</shortName>
    </alternativeName>
    <alternativeName>
        <fullName evidence="4">Probable 2-methyl-cis-aconitate hydratase</fullName>
        <ecNumber evidence="4">4.2.1.99</ecNumber>
    </alternativeName>
    <alternativeName>
        <fullName evidence="1">RNA-binding protein</fullName>
    </alternativeName>
</protein>
<evidence type="ECO:0000250" key="1">
    <source>
        <dbReference type="UniProtKB" id="P09339"/>
    </source>
</evidence>
<evidence type="ECO:0000250" key="2">
    <source>
        <dbReference type="UniProtKB" id="P36683"/>
    </source>
</evidence>
<evidence type="ECO:0000250" key="3">
    <source>
        <dbReference type="UniProtKB" id="Q8NQ98"/>
    </source>
</evidence>
<evidence type="ECO:0000250" key="4">
    <source>
        <dbReference type="UniProtKB" id="Q8ZP52"/>
    </source>
</evidence>
<evidence type="ECO:0000256" key="5">
    <source>
        <dbReference type="SAM" id="MobiDB-lite"/>
    </source>
</evidence>
<evidence type="ECO:0000305" key="6"/>
<gene>
    <name type="primary">acn</name>
    <name type="ordered locus">CE1661</name>
</gene>
<feature type="chain" id="PRO_0000076659" description="Aconitate hydratase A">
    <location>
        <begin position="1"/>
        <end position="937"/>
    </location>
</feature>
<feature type="region of interest" description="Disordered" evidence="5">
    <location>
        <begin position="410"/>
        <end position="450"/>
    </location>
</feature>
<feature type="compositionally biased region" description="Polar residues" evidence="5">
    <location>
        <begin position="418"/>
        <end position="429"/>
    </location>
</feature>
<feature type="compositionally biased region" description="Low complexity" evidence="5">
    <location>
        <begin position="433"/>
        <end position="444"/>
    </location>
</feature>
<feature type="binding site" evidence="2">
    <location>
        <position position="475"/>
    </location>
    <ligand>
        <name>[4Fe-4S] cluster</name>
        <dbReference type="ChEBI" id="CHEBI:49883"/>
    </ligand>
</feature>
<feature type="binding site" evidence="2">
    <location>
        <position position="541"/>
    </location>
    <ligand>
        <name>[4Fe-4S] cluster</name>
        <dbReference type="ChEBI" id="CHEBI:49883"/>
    </ligand>
</feature>
<feature type="binding site" evidence="2">
    <location>
        <position position="544"/>
    </location>
    <ligand>
        <name>[4Fe-4S] cluster</name>
        <dbReference type="ChEBI" id="CHEBI:49883"/>
    </ligand>
</feature>
<accession>Q8FTA8</accession>
<dbReference type="EC" id="4.2.1.3" evidence="3"/>
<dbReference type="EC" id="4.2.1.99" evidence="4"/>
<dbReference type="EMBL" id="BA000035">
    <property type="protein sequence ID" value="BAC18471.1"/>
    <property type="status" value="ALT_INIT"/>
    <property type="molecule type" value="Genomic_DNA"/>
</dbReference>
<dbReference type="RefSeq" id="WP_173362571.1">
    <property type="nucleotide sequence ID" value="NC_004369.1"/>
</dbReference>
<dbReference type="SMR" id="Q8FTA8"/>
<dbReference type="STRING" id="196164.gene:10742082"/>
<dbReference type="KEGG" id="cef:CE1661"/>
<dbReference type="eggNOG" id="COG1048">
    <property type="taxonomic scope" value="Bacteria"/>
</dbReference>
<dbReference type="HOGENOM" id="CLU_013476_2_1_11"/>
<dbReference type="UniPathway" id="UPA00223">
    <property type="reaction ID" value="UER00718"/>
</dbReference>
<dbReference type="UniPathway" id="UPA00946"/>
<dbReference type="Proteomes" id="UP000001409">
    <property type="component" value="Chromosome"/>
</dbReference>
<dbReference type="GO" id="GO:0047456">
    <property type="term" value="F:2-methylisocitrate dehydratase activity"/>
    <property type="evidence" value="ECO:0000250"/>
    <property type="project" value="UniProtKB"/>
</dbReference>
<dbReference type="GO" id="GO:0051539">
    <property type="term" value="F:4 iron, 4 sulfur cluster binding"/>
    <property type="evidence" value="ECO:0000250"/>
    <property type="project" value="UniProtKB"/>
</dbReference>
<dbReference type="GO" id="GO:0003994">
    <property type="term" value="F:aconitate hydratase activity"/>
    <property type="evidence" value="ECO:0000250"/>
    <property type="project" value="UniProtKB"/>
</dbReference>
<dbReference type="GO" id="GO:0046872">
    <property type="term" value="F:metal ion binding"/>
    <property type="evidence" value="ECO:0007669"/>
    <property type="project" value="UniProtKB-KW"/>
</dbReference>
<dbReference type="GO" id="GO:0003730">
    <property type="term" value="F:mRNA 3'-UTR binding"/>
    <property type="evidence" value="ECO:0000250"/>
    <property type="project" value="UniProtKB"/>
</dbReference>
<dbReference type="GO" id="GO:0003729">
    <property type="term" value="F:mRNA binding"/>
    <property type="evidence" value="ECO:0000250"/>
    <property type="project" value="UniProtKB"/>
</dbReference>
<dbReference type="GO" id="GO:0019679">
    <property type="term" value="P:propionate metabolic process, methylcitrate cycle"/>
    <property type="evidence" value="ECO:0000250"/>
    <property type="project" value="UniProtKB"/>
</dbReference>
<dbReference type="GO" id="GO:0006099">
    <property type="term" value="P:tricarboxylic acid cycle"/>
    <property type="evidence" value="ECO:0000250"/>
    <property type="project" value="UniProtKB"/>
</dbReference>
<dbReference type="CDD" id="cd01586">
    <property type="entry name" value="AcnA_IRP"/>
    <property type="match status" value="1"/>
</dbReference>
<dbReference type="CDD" id="cd01580">
    <property type="entry name" value="AcnA_IRP_Swivel"/>
    <property type="match status" value="1"/>
</dbReference>
<dbReference type="FunFam" id="3.20.19.10:FF:000001">
    <property type="entry name" value="Aconitate hydratase"/>
    <property type="match status" value="1"/>
</dbReference>
<dbReference type="FunFam" id="3.30.499.10:FF:000002">
    <property type="entry name" value="Aconitate hydratase"/>
    <property type="match status" value="1"/>
</dbReference>
<dbReference type="FunFam" id="3.30.499.10:FF:000009">
    <property type="entry name" value="Aconitate hydratase"/>
    <property type="match status" value="1"/>
</dbReference>
<dbReference type="Gene3D" id="6.10.190.10">
    <property type="match status" value="1"/>
</dbReference>
<dbReference type="Gene3D" id="3.30.499.10">
    <property type="entry name" value="Aconitase, domain 3"/>
    <property type="match status" value="2"/>
</dbReference>
<dbReference type="Gene3D" id="3.20.19.10">
    <property type="entry name" value="Aconitase, domain 4"/>
    <property type="match status" value="1"/>
</dbReference>
<dbReference type="InterPro" id="IPR044137">
    <property type="entry name" value="AcnA_IRP_Swivel"/>
</dbReference>
<dbReference type="InterPro" id="IPR015931">
    <property type="entry name" value="Acnase/IPM_dHydase_lsu_aba_1/3"/>
</dbReference>
<dbReference type="InterPro" id="IPR001030">
    <property type="entry name" value="Acoase/IPM_deHydtase_lsu_aba"/>
</dbReference>
<dbReference type="InterPro" id="IPR015928">
    <property type="entry name" value="Aconitase/3IPM_dehydase_swvl"/>
</dbReference>
<dbReference type="InterPro" id="IPR006249">
    <property type="entry name" value="Aconitase/IRP2"/>
</dbReference>
<dbReference type="InterPro" id="IPR018136">
    <property type="entry name" value="Aconitase_4Fe-4S_BS"/>
</dbReference>
<dbReference type="InterPro" id="IPR036008">
    <property type="entry name" value="Aconitase_4Fe-4S_dom"/>
</dbReference>
<dbReference type="InterPro" id="IPR000573">
    <property type="entry name" value="AconitaseA/IPMdHydase_ssu_swvl"/>
</dbReference>
<dbReference type="NCBIfam" id="NF006757">
    <property type="entry name" value="PRK09277.1"/>
    <property type="match status" value="1"/>
</dbReference>
<dbReference type="NCBIfam" id="NF009520">
    <property type="entry name" value="PRK12881.1"/>
    <property type="match status" value="1"/>
</dbReference>
<dbReference type="PANTHER" id="PTHR11670">
    <property type="entry name" value="ACONITASE/IRON-RESPONSIVE ELEMENT FAMILY MEMBER"/>
    <property type="match status" value="1"/>
</dbReference>
<dbReference type="Pfam" id="PF00330">
    <property type="entry name" value="Aconitase"/>
    <property type="match status" value="1"/>
</dbReference>
<dbReference type="Pfam" id="PF00694">
    <property type="entry name" value="Aconitase_C"/>
    <property type="match status" value="1"/>
</dbReference>
<dbReference type="PRINTS" id="PR00415">
    <property type="entry name" value="ACONITASE"/>
</dbReference>
<dbReference type="SUPFAM" id="SSF53732">
    <property type="entry name" value="Aconitase iron-sulfur domain"/>
    <property type="match status" value="1"/>
</dbReference>
<dbReference type="SUPFAM" id="SSF52016">
    <property type="entry name" value="LeuD/IlvD-like"/>
    <property type="match status" value="1"/>
</dbReference>
<dbReference type="PROSITE" id="PS00450">
    <property type="entry name" value="ACONITASE_1"/>
    <property type="match status" value="1"/>
</dbReference>
<dbReference type="PROSITE" id="PS01244">
    <property type="entry name" value="ACONITASE_2"/>
    <property type="match status" value="1"/>
</dbReference>
<keyword id="KW-0408">Iron</keyword>
<keyword id="KW-0411">Iron-sulfur</keyword>
<keyword id="KW-0456">Lyase</keyword>
<keyword id="KW-0479">Metal-binding</keyword>
<keyword id="KW-1185">Reference proteome</keyword>
<keyword id="KW-0694">RNA-binding</keyword>
<keyword id="KW-0816">Tricarboxylic acid cycle</keyword>
<comment type="function">
    <text evidence="1 3 4">Involved in the catabolism of short chain fatty acids (SCFA) via the tricarboxylic acid (TCA)(acetyl degradation route) and probably via the 2-methylcitrate cycle I (propionate degradation route). Catalyzes the reversible isomerization of citrate to isocitrate via cis-aconitate. Could catalyze the hydration of 2-methyl-cis-aconitate to yield (2R,3S)-2-methylisocitrate. The apo form of AcnA functions as a RNA-binding regulatory protein.</text>
</comment>
<comment type="catalytic activity">
    <reaction evidence="3">
        <text>citrate = D-threo-isocitrate</text>
        <dbReference type="Rhea" id="RHEA:10336"/>
        <dbReference type="ChEBI" id="CHEBI:15562"/>
        <dbReference type="ChEBI" id="CHEBI:16947"/>
        <dbReference type="EC" id="4.2.1.3"/>
    </reaction>
</comment>
<comment type="catalytic activity">
    <reaction evidence="4">
        <text>(2S,3R)-3-hydroxybutane-1,2,3-tricarboxylate = 2-methyl-cis-aconitate + H2O</text>
        <dbReference type="Rhea" id="RHEA:17941"/>
        <dbReference type="ChEBI" id="CHEBI:15377"/>
        <dbReference type="ChEBI" id="CHEBI:57429"/>
        <dbReference type="ChEBI" id="CHEBI:57872"/>
        <dbReference type="EC" id="4.2.1.99"/>
    </reaction>
</comment>
<comment type="cofactor">
    <cofactor evidence="3">
        <name>[4Fe-4S] cluster</name>
        <dbReference type="ChEBI" id="CHEBI:49883"/>
    </cofactor>
    <text evidence="3">Binds 1 [4Fe-4S] cluster per subunit.</text>
</comment>
<comment type="pathway">
    <text evidence="3">Carbohydrate metabolism; tricarboxylic acid cycle; isocitrate from oxaloacetate: step 2/2.</text>
</comment>
<comment type="pathway">
    <text evidence="3">Organic acid metabolism; propanoate degradation.</text>
</comment>
<comment type="subunit">
    <text evidence="3">Monomer.</text>
</comment>
<comment type="similarity">
    <text evidence="6">Belongs to the aconitase/IPM isomerase family.</text>
</comment>
<comment type="sequence caution" evidence="6">
    <conflict type="erroneous initiation">
        <sequence resource="EMBL-CDS" id="BAC18471"/>
    </conflict>
</comment>